<accession>A7NCX8</accession>
<name>GSA_FRATF</name>
<organism>
    <name type="scientific">Francisella tularensis subsp. holarctica (strain FTNF002-00 / FTA)</name>
    <dbReference type="NCBI Taxonomy" id="458234"/>
    <lineage>
        <taxon>Bacteria</taxon>
        <taxon>Pseudomonadati</taxon>
        <taxon>Pseudomonadota</taxon>
        <taxon>Gammaproteobacteria</taxon>
        <taxon>Thiotrichales</taxon>
        <taxon>Francisellaceae</taxon>
        <taxon>Francisella</taxon>
    </lineage>
</organism>
<protein>
    <recommendedName>
        <fullName evidence="1">Glutamate-1-semialdehyde 2,1-aminomutase</fullName>
        <shortName evidence="1">GSA</shortName>
        <ecNumber evidence="1">5.4.3.8</ecNumber>
    </recommendedName>
    <alternativeName>
        <fullName evidence="1">Glutamate-1-semialdehyde aminotransferase</fullName>
        <shortName evidence="1">GSA-AT</shortName>
    </alternativeName>
</protein>
<reference key="1">
    <citation type="journal article" date="2009" name="PLoS ONE">
        <title>Complete genome sequence of Francisella tularensis subspecies holarctica FTNF002-00.</title>
        <authorList>
            <person name="Barabote R.D."/>
            <person name="Xie G."/>
            <person name="Brettin T.S."/>
            <person name="Hinrichs S.H."/>
            <person name="Fey P.D."/>
            <person name="Jay J.J."/>
            <person name="Engle J.L."/>
            <person name="Godbole S.D."/>
            <person name="Noronha J.M."/>
            <person name="Scheuermann R.H."/>
            <person name="Zhou L.W."/>
            <person name="Lion C."/>
            <person name="Dempsey M.P."/>
        </authorList>
    </citation>
    <scope>NUCLEOTIDE SEQUENCE [LARGE SCALE GENOMIC DNA]</scope>
    <source>
        <strain>FTNF002-00 / FTA</strain>
    </source>
</reference>
<keyword id="KW-0963">Cytoplasm</keyword>
<keyword id="KW-0413">Isomerase</keyword>
<keyword id="KW-0627">Porphyrin biosynthesis</keyword>
<keyword id="KW-0663">Pyridoxal phosphate</keyword>
<gene>
    <name evidence="1" type="primary">hemL</name>
    <name type="ordered locus">FTA_1356</name>
</gene>
<feature type="chain" id="PRO_1000059989" description="Glutamate-1-semialdehyde 2,1-aminomutase">
    <location>
        <begin position="1"/>
        <end position="431"/>
    </location>
</feature>
<feature type="modified residue" description="N6-(pyridoxal phosphate)lysine" evidence="1">
    <location>
        <position position="269"/>
    </location>
</feature>
<sequence>MENKSNSQILFAEAQQYIPGGVNSPVRAFKSVGQEFPRFIKFAKGAYLYDVDWNKYIDYIGSWGPMILGHCDDDVLEAIQCQVKNGLSYGAPCKQEVDLAKKIIELMPNIEQVRFVNSGTEATISAIRLARAYTCRNKIIKFEGCYHGHADEFLVAAGSGALSLGQPNSPGVPEDVVKDTLVASFNDMESIQALFEKYKDEIACIIVEPIAGNMNMIFPQDGFLAKLRAICDQNSSLLIFDEVMTGFRVALGGAQSIYNVKPDLTTLGKVIGGGMPVGAFGGRKEIMQKVSPAGPVYQAGTLSGNPIAMTAGIKTLEKISQPGFFDELGAKAQKLVDGLNEAAKAYDFNFHAKCLGGMFGLFFCSDKIAVNTFVDLGKTNLKMFNQFFAYMLDNGVYLAPSAYEAGFISIAHSDEDIEKTICLAKKFFQEN</sequence>
<comment type="catalytic activity">
    <reaction evidence="1">
        <text>(S)-4-amino-5-oxopentanoate = 5-aminolevulinate</text>
        <dbReference type="Rhea" id="RHEA:14265"/>
        <dbReference type="ChEBI" id="CHEBI:57501"/>
        <dbReference type="ChEBI" id="CHEBI:356416"/>
        <dbReference type="EC" id="5.4.3.8"/>
    </reaction>
</comment>
<comment type="cofactor">
    <cofactor evidence="1">
        <name>pyridoxal 5'-phosphate</name>
        <dbReference type="ChEBI" id="CHEBI:597326"/>
    </cofactor>
</comment>
<comment type="pathway">
    <text evidence="1">Porphyrin-containing compound metabolism; protoporphyrin-IX biosynthesis; 5-aminolevulinate from L-glutamyl-tRNA(Glu): step 2/2.</text>
</comment>
<comment type="subunit">
    <text evidence="1">Homodimer.</text>
</comment>
<comment type="subcellular location">
    <subcellularLocation>
        <location evidence="1">Cytoplasm</location>
    </subcellularLocation>
</comment>
<comment type="similarity">
    <text evidence="1">Belongs to the class-III pyridoxal-phosphate-dependent aminotransferase family. HemL subfamily.</text>
</comment>
<evidence type="ECO:0000255" key="1">
    <source>
        <dbReference type="HAMAP-Rule" id="MF_00375"/>
    </source>
</evidence>
<dbReference type="EC" id="5.4.3.8" evidence="1"/>
<dbReference type="EMBL" id="CP000803">
    <property type="protein sequence ID" value="ABU61831.1"/>
    <property type="molecule type" value="Genomic_DNA"/>
</dbReference>
<dbReference type="RefSeq" id="WP_010031613.1">
    <property type="nucleotide sequence ID" value="NC_009749.1"/>
</dbReference>
<dbReference type="SMR" id="A7NCX8"/>
<dbReference type="KEGG" id="fta:FTA_1356"/>
<dbReference type="HOGENOM" id="CLU_016922_1_5_6"/>
<dbReference type="UniPathway" id="UPA00251">
    <property type="reaction ID" value="UER00317"/>
</dbReference>
<dbReference type="GO" id="GO:0005737">
    <property type="term" value="C:cytoplasm"/>
    <property type="evidence" value="ECO:0007669"/>
    <property type="project" value="UniProtKB-SubCell"/>
</dbReference>
<dbReference type="GO" id="GO:0042286">
    <property type="term" value="F:glutamate-1-semialdehyde 2,1-aminomutase activity"/>
    <property type="evidence" value="ECO:0007669"/>
    <property type="project" value="UniProtKB-UniRule"/>
</dbReference>
<dbReference type="GO" id="GO:0030170">
    <property type="term" value="F:pyridoxal phosphate binding"/>
    <property type="evidence" value="ECO:0007669"/>
    <property type="project" value="InterPro"/>
</dbReference>
<dbReference type="GO" id="GO:0008483">
    <property type="term" value="F:transaminase activity"/>
    <property type="evidence" value="ECO:0007669"/>
    <property type="project" value="InterPro"/>
</dbReference>
<dbReference type="GO" id="GO:0006782">
    <property type="term" value="P:protoporphyrinogen IX biosynthetic process"/>
    <property type="evidence" value="ECO:0007669"/>
    <property type="project" value="UniProtKB-UniRule"/>
</dbReference>
<dbReference type="CDD" id="cd00610">
    <property type="entry name" value="OAT_like"/>
    <property type="match status" value="1"/>
</dbReference>
<dbReference type="FunFam" id="3.40.640.10:FF:000021">
    <property type="entry name" value="Glutamate-1-semialdehyde 2,1-aminomutase"/>
    <property type="match status" value="1"/>
</dbReference>
<dbReference type="Gene3D" id="3.90.1150.10">
    <property type="entry name" value="Aspartate Aminotransferase, domain 1"/>
    <property type="match status" value="1"/>
</dbReference>
<dbReference type="Gene3D" id="3.40.640.10">
    <property type="entry name" value="Type I PLP-dependent aspartate aminotransferase-like (Major domain)"/>
    <property type="match status" value="1"/>
</dbReference>
<dbReference type="HAMAP" id="MF_00375">
    <property type="entry name" value="HemL_aminotrans_3"/>
    <property type="match status" value="1"/>
</dbReference>
<dbReference type="InterPro" id="IPR004639">
    <property type="entry name" value="4pyrrol_synth_GluAld_NH2Trfase"/>
</dbReference>
<dbReference type="InterPro" id="IPR005814">
    <property type="entry name" value="Aminotrans_3"/>
</dbReference>
<dbReference type="InterPro" id="IPR049704">
    <property type="entry name" value="Aminotrans_3_PPA_site"/>
</dbReference>
<dbReference type="InterPro" id="IPR015424">
    <property type="entry name" value="PyrdxlP-dep_Trfase"/>
</dbReference>
<dbReference type="InterPro" id="IPR015421">
    <property type="entry name" value="PyrdxlP-dep_Trfase_major"/>
</dbReference>
<dbReference type="InterPro" id="IPR015422">
    <property type="entry name" value="PyrdxlP-dep_Trfase_small"/>
</dbReference>
<dbReference type="NCBIfam" id="TIGR00713">
    <property type="entry name" value="hemL"/>
    <property type="match status" value="1"/>
</dbReference>
<dbReference type="NCBIfam" id="NF000818">
    <property type="entry name" value="PRK00062.1"/>
    <property type="match status" value="1"/>
</dbReference>
<dbReference type="PANTHER" id="PTHR43713">
    <property type="entry name" value="GLUTAMATE-1-SEMIALDEHYDE 2,1-AMINOMUTASE"/>
    <property type="match status" value="1"/>
</dbReference>
<dbReference type="PANTHER" id="PTHR43713:SF3">
    <property type="entry name" value="GLUTAMATE-1-SEMIALDEHYDE 2,1-AMINOMUTASE 1, CHLOROPLASTIC-RELATED"/>
    <property type="match status" value="1"/>
</dbReference>
<dbReference type="Pfam" id="PF00202">
    <property type="entry name" value="Aminotran_3"/>
    <property type="match status" value="1"/>
</dbReference>
<dbReference type="SUPFAM" id="SSF53383">
    <property type="entry name" value="PLP-dependent transferases"/>
    <property type="match status" value="1"/>
</dbReference>
<dbReference type="PROSITE" id="PS00600">
    <property type="entry name" value="AA_TRANSFER_CLASS_3"/>
    <property type="match status" value="1"/>
</dbReference>
<proteinExistence type="inferred from homology"/>